<sequence length="312" mass="34084">MGWSRKDLLHIEDLPAKEIQLILNTAKPMKEIMSRAVKKLPTFRGKSVYNLFFESSTRTRTSFETAAKILGADTSSLAVAQSSLNKGETLLDTVRTLQAMKPDLVVIRHSSSGAAQFLAKELKAGVINAGDGQHEHPTQALLDLYTMQERLGSVEGRKILLVGDILHSRVARSNVWALKNLGAEVVLVGPPTLLPPEIKSWGVKTTFNLDEELPGSDVIMALRLQLERQQSGLLPSLREYSQLYGITAERVKKTGKQTLIMHPGPVNRGVEIESSIANSSQSVIEEQVTNGVAVRMAIMYLLLGGGTAHVVD</sequence>
<proteinExistence type="inferred from homology"/>
<comment type="function">
    <text evidence="1">Catalyzes the condensation of carbamoyl phosphate and aspartate to form carbamoyl aspartate and inorganic phosphate, the committed step in the de novo pyrimidine nucleotide biosynthesis pathway.</text>
</comment>
<comment type="catalytic activity">
    <reaction evidence="1">
        <text>carbamoyl phosphate + L-aspartate = N-carbamoyl-L-aspartate + phosphate + H(+)</text>
        <dbReference type="Rhea" id="RHEA:20013"/>
        <dbReference type="ChEBI" id="CHEBI:15378"/>
        <dbReference type="ChEBI" id="CHEBI:29991"/>
        <dbReference type="ChEBI" id="CHEBI:32814"/>
        <dbReference type="ChEBI" id="CHEBI:43474"/>
        <dbReference type="ChEBI" id="CHEBI:58228"/>
        <dbReference type="EC" id="2.1.3.2"/>
    </reaction>
</comment>
<comment type="pathway">
    <text evidence="1">Pyrimidine metabolism; UMP biosynthesis via de novo pathway; (S)-dihydroorotate from bicarbonate: step 2/3.</text>
</comment>
<comment type="subunit">
    <text evidence="1">Heterododecamer (2C3:3R2) of six catalytic PyrB chains organized as two trimers (C3), and six regulatory PyrI chains organized as three dimers (R2).</text>
</comment>
<comment type="similarity">
    <text evidence="1">Belongs to the aspartate/ornithine carbamoyltransferase superfamily. ATCase family.</text>
</comment>
<feature type="chain" id="PRO_1000116138" description="Aspartate carbamoyltransferase catalytic subunit">
    <location>
        <begin position="1"/>
        <end position="312"/>
    </location>
</feature>
<feature type="binding site" evidence="1">
    <location>
        <position position="58"/>
    </location>
    <ligand>
        <name>carbamoyl phosphate</name>
        <dbReference type="ChEBI" id="CHEBI:58228"/>
    </ligand>
</feature>
<feature type="binding site" evidence="1">
    <location>
        <position position="59"/>
    </location>
    <ligand>
        <name>carbamoyl phosphate</name>
        <dbReference type="ChEBI" id="CHEBI:58228"/>
    </ligand>
</feature>
<feature type="binding site" evidence="1">
    <location>
        <position position="86"/>
    </location>
    <ligand>
        <name>L-aspartate</name>
        <dbReference type="ChEBI" id="CHEBI:29991"/>
    </ligand>
</feature>
<feature type="binding site" evidence="1">
    <location>
        <position position="108"/>
    </location>
    <ligand>
        <name>carbamoyl phosphate</name>
        <dbReference type="ChEBI" id="CHEBI:58228"/>
    </ligand>
</feature>
<feature type="binding site" evidence="1">
    <location>
        <position position="136"/>
    </location>
    <ligand>
        <name>carbamoyl phosphate</name>
        <dbReference type="ChEBI" id="CHEBI:58228"/>
    </ligand>
</feature>
<feature type="binding site" evidence="1">
    <location>
        <position position="139"/>
    </location>
    <ligand>
        <name>carbamoyl phosphate</name>
        <dbReference type="ChEBI" id="CHEBI:58228"/>
    </ligand>
</feature>
<feature type="binding site" evidence="1">
    <location>
        <position position="169"/>
    </location>
    <ligand>
        <name>L-aspartate</name>
        <dbReference type="ChEBI" id="CHEBI:29991"/>
    </ligand>
</feature>
<feature type="binding site" evidence="1">
    <location>
        <position position="223"/>
    </location>
    <ligand>
        <name>L-aspartate</name>
        <dbReference type="ChEBI" id="CHEBI:29991"/>
    </ligand>
</feature>
<feature type="binding site" evidence="1">
    <location>
        <position position="264"/>
    </location>
    <ligand>
        <name>carbamoyl phosphate</name>
        <dbReference type="ChEBI" id="CHEBI:58228"/>
    </ligand>
</feature>
<feature type="binding site" evidence="1">
    <location>
        <position position="265"/>
    </location>
    <ligand>
        <name>carbamoyl phosphate</name>
        <dbReference type="ChEBI" id="CHEBI:58228"/>
    </ligand>
</feature>
<protein>
    <recommendedName>
        <fullName evidence="1">Aspartate carbamoyltransferase catalytic subunit</fullName>
        <ecNumber evidence="1">2.1.3.2</ecNumber>
    </recommendedName>
    <alternativeName>
        <fullName evidence="1">Aspartate transcarbamylase</fullName>
        <shortName evidence="1">ATCase</shortName>
    </alternativeName>
</protein>
<accession>B8FT13</accession>
<reference key="1">
    <citation type="journal article" date="2012" name="BMC Microbiol.">
        <title>Genome sequence of Desulfitobacterium hafniense DCB-2, a Gram-positive anaerobe capable of dehalogenation and metal reduction.</title>
        <authorList>
            <person name="Kim S.H."/>
            <person name="Harzman C."/>
            <person name="Davis J.K."/>
            <person name="Hutcheson R."/>
            <person name="Broderick J.B."/>
            <person name="Marsh T.L."/>
            <person name="Tiedje J.M."/>
        </authorList>
    </citation>
    <scope>NUCLEOTIDE SEQUENCE [LARGE SCALE GENOMIC DNA]</scope>
    <source>
        <strain>DSM 10664 / DCB-2</strain>
    </source>
</reference>
<gene>
    <name evidence="1" type="primary">pyrB</name>
    <name type="ordered locus">Dhaf_4019</name>
</gene>
<name>PYRB_DESHD</name>
<evidence type="ECO:0000255" key="1">
    <source>
        <dbReference type="HAMAP-Rule" id="MF_00001"/>
    </source>
</evidence>
<organism>
    <name type="scientific">Desulfitobacterium hafniense (strain DSM 10664 / DCB-2)</name>
    <dbReference type="NCBI Taxonomy" id="272564"/>
    <lineage>
        <taxon>Bacteria</taxon>
        <taxon>Bacillati</taxon>
        <taxon>Bacillota</taxon>
        <taxon>Clostridia</taxon>
        <taxon>Eubacteriales</taxon>
        <taxon>Desulfitobacteriaceae</taxon>
        <taxon>Desulfitobacterium</taxon>
    </lineage>
</organism>
<dbReference type="EC" id="2.1.3.2" evidence="1"/>
<dbReference type="EMBL" id="CP001336">
    <property type="protein sequence ID" value="ACL22029.1"/>
    <property type="molecule type" value="Genomic_DNA"/>
</dbReference>
<dbReference type="RefSeq" id="WP_011460660.1">
    <property type="nucleotide sequence ID" value="NC_011830.1"/>
</dbReference>
<dbReference type="SMR" id="B8FT13"/>
<dbReference type="KEGG" id="dhd:Dhaf_4019"/>
<dbReference type="HOGENOM" id="CLU_043846_2_0_9"/>
<dbReference type="UniPathway" id="UPA00070">
    <property type="reaction ID" value="UER00116"/>
</dbReference>
<dbReference type="Proteomes" id="UP000007726">
    <property type="component" value="Chromosome"/>
</dbReference>
<dbReference type="GO" id="GO:0005829">
    <property type="term" value="C:cytosol"/>
    <property type="evidence" value="ECO:0007669"/>
    <property type="project" value="TreeGrafter"/>
</dbReference>
<dbReference type="GO" id="GO:0016597">
    <property type="term" value="F:amino acid binding"/>
    <property type="evidence" value="ECO:0007669"/>
    <property type="project" value="InterPro"/>
</dbReference>
<dbReference type="GO" id="GO:0004070">
    <property type="term" value="F:aspartate carbamoyltransferase activity"/>
    <property type="evidence" value="ECO:0007669"/>
    <property type="project" value="UniProtKB-UniRule"/>
</dbReference>
<dbReference type="GO" id="GO:0006207">
    <property type="term" value="P:'de novo' pyrimidine nucleobase biosynthetic process"/>
    <property type="evidence" value="ECO:0007669"/>
    <property type="project" value="InterPro"/>
</dbReference>
<dbReference type="GO" id="GO:0044205">
    <property type="term" value="P:'de novo' UMP biosynthetic process"/>
    <property type="evidence" value="ECO:0007669"/>
    <property type="project" value="UniProtKB-UniRule"/>
</dbReference>
<dbReference type="GO" id="GO:0006520">
    <property type="term" value="P:amino acid metabolic process"/>
    <property type="evidence" value="ECO:0007669"/>
    <property type="project" value="InterPro"/>
</dbReference>
<dbReference type="FunFam" id="3.40.50.1370:FF:000007">
    <property type="entry name" value="Aspartate carbamoyltransferase"/>
    <property type="match status" value="1"/>
</dbReference>
<dbReference type="Gene3D" id="3.40.50.1370">
    <property type="entry name" value="Aspartate/ornithine carbamoyltransferase"/>
    <property type="match status" value="2"/>
</dbReference>
<dbReference type="HAMAP" id="MF_00001">
    <property type="entry name" value="Asp_carb_tr"/>
    <property type="match status" value="1"/>
</dbReference>
<dbReference type="InterPro" id="IPR006132">
    <property type="entry name" value="Asp/Orn_carbamoyltranf_P-bd"/>
</dbReference>
<dbReference type="InterPro" id="IPR006130">
    <property type="entry name" value="Asp/Orn_carbamoylTrfase"/>
</dbReference>
<dbReference type="InterPro" id="IPR036901">
    <property type="entry name" value="Asp/Orn_carbamoylTrfase_sf"/>
</dbReference>
<dbReference type="InterPro" id="IPR002082">
    <property type="entry name" value="Asp_carbamoyltransf"/>
</dbReference>
<dbReference type="InterPro" id="IPR006131">
    <property type="entry name" value="Asp_carbamoyltransf_Asp/Orn-bd"/>
</dbReference>
<dbReference type="NCBIfam" id="TIGR00670">
    <property type="entry name" value="asp_carb_tr"/>
    <property type="match status" value="1"/>
</dbReference>
<dbReference type="NCBIfam" id="NF002032">
    <property type="entry name" value="PRK00856.1"/>
    <property type="match status" value="1"/>
</dbReference>
<dbReference type="PANTHER" id="PTHR45753:SF6">
    <property type="entry name" value="ASPARTATE CARBAMOYLTRANSFERASE"/>
    <property type="match status" value="1"/>
</dbReference>
<dbReference type="PANTHER" id="PTHR45753">
    <property type="entry name" value="ORNITHINE CARBAMOYLTRANSFERASE, MITOCHONDRIAL"/>
    <property type="match status" value="1"/>
</dbReference>
<dbReference type="Pfam" id="PF00185">
    <property type="entry name" value="OTCace"/>
    <property type="match status" value="1"/>
</dbReference>
<dbReference type="Pfam" id="PF02729">
    <property type="entry name" value="OTCace_N"/>
    <property type="match status" value="1"/>
</dbReference>
<dbReference type="PRINTS" id="PR00100">
    <property type="entry name" value="AOTCASE"/>
</dbReference>
<dbReference type="PRINTS" id="PR00101">
    <property type="entry name" value="ATCASE"/>
</dbReference>
<dbReference type="SUPFAM" id="SSF53671">
    <property type="entry name" value="Aspartate/ornithine carbamoyltransferase"/>
    <property type="match status" value="1"/>
</dbReference>
<dbReference type="PROSITE" id="PS00097">
    <property type="entry name" value="CARBAMOYLTRANSFERASE"/>
    <property type="match status" value="1"/>
</dbReference>
<keyword id="KW-0665">Pyrimidine biosynthesis</keyword>
<keyword id="KW-0808">Transferase</keyword>